<dbReference type="EMBL" id="FJ834436">
    <property type="protein sequence ID" value="ACU56815.1"/>
    <property type="molecule type" value="Genomic_DNA"/>
</dbReference>
<dbReference type="SMR" id="C7T1P4"/>
<dbReference type="ConoServer" id="3837">
    <property type="toxin name" value="Eb6.15 (Partial)"/>
</dbReference>
<dbReference type="GO" id="GO:0005576">
    <property type="term" value="C:extracellular region"/>
    <property type="evidence" value="ECO:0007669"/>
    <property type="project" value="UniProtKB-SubCell"/>
</dbReference>
<dbReference type="GO" id="GO:0090729">
    <property type="term" value="F:toxin activity"/>
    <property type="evidence" value="ECO:0007669"/>
    <property type="project" value="UniProtKB-KW"/>
</dbReference>
<evidence type="ECO:0000250" key="1"/>
<evidence type="ECO:0000305" key="2"/>
<feature type="peptide" id="PRO_0000414640" description="Conotoxin Eb6.15">
    <location>
        <begin position="1" status="less than"/>
        <end position="26"/>
    </location>
</feature>
<feature type="disulfide bond" evidence="1">
    <location>
        <begin position="7"/>
        <end position="18"/>
    </location>
</feature>
<feature type="disulfide bond" evidence="1">
    <location>
        <begin position="13"/>
        <end position="25"/>
    </location>
</feature>
<feature type="disulfide bond" evidence="1">
    <location>
        <begin status="unknown"/>
        <end position="14"/>
    </location>
</feature>
<feature type="non-terminal residue">
    <location>
        <position position="1"/>
    </location>
</feature>
<sequence>TRSGGACNSHNQCCDDFCSTATSTCV</sequence>
<organism>
    <name type="scientific">Conus ebraeus</name>
    <name type="common">Hebrew cone</name>
    <dbReference type="NCBI Taxonomy" id="89425"/>
    <lineage>
        <taxon>Eukaryota</taxon>
        <taxon>Metazoa</taxon>
        <taxon>Spiralia</taxon>
        <taxon>Lophotrochozoa</taxon>
        <taxon>Mollusca</taxon>
        <taxon>Gastropoda</taxon>
        <taxon>Caenogastropoda</taxon>
        <taxon>Neogastropoda</taxon>
        <taxon>Conoidea</taxon>
        <taxon>Conidae</taxon>
        <taxon>Conus</taxon>
        <taxon>Virroconus</taxon>
    </lineage>
</organism>
<proteinExistence type="evidence at transcript level"/>
<keyword id="KW-1015">Disulfide bond</keyword>
<keyword id="KW-0960">Knottin</keyword>
<keyword id="KW-0964">Secreted</keyword>
<keyword id="KW-0800">Toxin</keyword>
<accession>C7T1P4</accession>
<comment type="subcellular location">
    <subcellularLocation>
        <location evidence="1">Secreted</location>
    </subcellularLocation>
</comment>
<comment type="tissue specificity">
    <text>Expressed by the venom duct.</text>
</comment>
<comment type="domain">
    <text evidence="1">The presence of a 'disulfide through disulfide knot' structurally defines this protein as a knottin.</text>
</comment>
<comment type="domain">
    <text>The cysteine framework is VI/VII (C-C-CC-C-C).</text>
</comment>
<comment type="miscellaneous">
    <text>This peptide corresponds to allele E1l. Has not been merged with other alleles since they may differ due to geographic variation (see strain in PubMed:19606224).</text>
</comment>
<comment type="similarity">
    <text evidence="2">Belongs to the conotoxin O1 superfamily.</text>
</comment>
<name>O16F_CONEA</name>
<protein>
    <recommendedName>
        <fullName>Conotoxin Eb6.15</fullName>
    </recommendedName>
</protein>
<reference key="1">
    <citation type="journal article" date="2009" name="PLoS ONE">
        <title>Geographic variation in venom allelic composition and diets of the widespread predatory marine gastropod Conus ebraeus.</title>
        <authorList>
            <person name="Duda T.F. Jr."/>
            <person name="Chang D."/>
            <person name="Lewis B.D."/>
            <person name="Lee T."/>
        </authorList>
    </citation>
    <scope>NUCLEOTIDE SEQUENCE [GENOMIC DNA]</scope>
    <source>
        <strain>Okinawa</strain>
        <tissue>Foot</tissue>
    </source>
</reference>
<gene>
    <name type="primary">E1</name>
</gene>